<protein>
    <recommendedName>
        <fullName evidence="1">Anthranilate phosphoribosyltransferase</fullName>
        <ecNumber evidence="1">2.4.2.18</ecNumber>
    </recommendedName>
</protein>
<gene>
    <name evidence="1" type="primary">trpD</name>
    <name type="ordered locus">SGO_0659</name>
</gene>
<proteinExistence type="inferred from homology"/>
<dbReference type="EC" id="2.4.2.18" evidence="1"/>
<dbReference type="EMBL" id="CP000725">
    <property type="protein sequence ID" value="ABV10618.1"/>
    <property type="molecule type" value="Genomic_DNA"/>
</dbReference>
<dbReference type="RefSeq" id="WP_012000136.1">
    <property type="nucleotide sequence ID" value="NC_009785.1"/>
</dbReference>
<dbReference type="SMR" id="A8AW02"/>
<dbReference type="STRING" id="467705.SGO_0659"/>
<dbReference type="KEGG" id="sgo:SGO_0659"/>
<dbReference type="eggNOG" id="COG0547">
    <property type="taxonomic scope" value="Bacteria"/>
</dbReference>
<dbReference type="HOGENOM" id="CLU_034315_2_1_9"/>
<dbReference type="UniPathway" id="UPA00035">
    <property type="reaction ID" value="UER00041"/>
</dbReference>
<dbReference type="Proteomes" id="UP000001131">
    <property type="component" value="Chromosome"/>
</dbReference>
<dbReference type="GO" id="GO:0005829">
    <property type="term" value="C:cytosol"/>
    <property type="evidence" value="ECO:0007669"/>
    <property type="project" value="TreeGrafter"/>
</dbReference>
<dbReference type="GO" id="GO:0004048">
    <property type="term" value="F:anthranilate phosphoribosyltransferase activity"/>
    <property type="evidence" value="ECO:0007669"/>
    <property type="project" value="UniProtKB-UniRule"/>
</dbReference>
<dbReference type="GO" id="GO:0000287">
    <property type="term" value="F:magnesium ion binding"/>
    <property type="evidence" value="ECO:0007669"/>
    <property type="project" value="UniProtKB-UniRule"/>
</dbReference>
<dbReference type="GO" id="GO:0000162">
    <property type="term" value="P:L-tryptophan biosynthetic process"/>
    <property type="evidence" value="ECO:0007669"/>
    <property type="project" value="UniProtKB-UniRule"/>
</dbReference>
<dbReference type="FunFam" id="3.40.1030.10:FF:000002">
    <property type="entry name" value="Anthranilate phosphoribosyltransferase"/>
    <property type="match status" value="1"/>
</dbReference>
<dbReference type="Gene3D" id="3.40.1030.10">
    <property type="entry name" value="Nucleoside phosphorylase/phosphoribosyltransferase catalytic domain"/>
    <property type="match status" value="1"/>
</dbReference>
<dbReference type="Gene3D" id="1.20.970.10">
    <property type="entry name" value="Transferase, Pyrimidine Nucleoside Phosphorylase, Chain C"/>
    <property type="match status" value="1"/>
</dbReference>
<dbReference type="HAMAP" id="MF_00211">
    <property type="entry name" value="TrpD"/>
    <property type="match status" value="1"/>
</dbReference>
<dbReference type="InterPro" id="IPR005940">
    <property type="entry name" value="Anthranilate_Pribosyl_Tfrase"/>
</dbReference>
<dbReference type="InterPro" id="IPR000312">
    <property type="entry name" value="Glycosyl_Trfase_fam3"/>
</dbReference>
<dbReference type="InterPro" id="IPR017459">
    <property type="entry name" value="Glycosyl_Trfase_fam3_N_dom"/>
</dbReference>
<dbReference type="InterPro" id="IPR036320">
    <property type="entry name" value="Glycosyl_Trfase_fam3_N_dom_sf"/>
</dbReference>
<dbReference type="InterPro" id="IPR035902">
    <property type="entry name" value="Nuc_phospho_transferase"/>
</dbReference>
<dbReference type="NCBIfam" id="TIGR01245">
    <property type="entry name" value="trpD"/>
    <property type="match status" value="1"/>
</dbReference>
<dbReference type="PANTHER" id="PTHR43285">
    <property type="entry name" value="ANTHRANILATE PHOSPHORIBOSYLTRANSFERASE"/>
    <property type="match status" value="1"/>
</dbReference>
<dbReference type="PANTHER" id="PTHR43285:SF2">
    <property type="entry name" value="ANTHRANILATE PHOSPHORIBOSYLTRANSFERASE"/>
    <property type="match status" value="1"/>
</dbReference>
<dbReference type="Pfam" id="PF02885">
    <property type="entry name" value="Glycos_trans_3N"/>
    <property type="match status" value="1"/>
</dbReference>
<dbReference type="Pfam" id="PF00591">
    <property type="entry name" value="Glycos_transf_3"/>
    <property type="match status" value="1"/>
</dbReference>
<dbReference type="SUPFAM" id="SSF52418">
    <property type="entry name" value="Nucleoside phosphorylase/phosphoribosyltransferase catalytic domain"/>
    <property type="match status" value="1"/>
</dbReference>
<dbReference type="SUPFAM" id="SSF47648">
    <property type="entry name" value="Nucleoside phosphorylase/phosphoribosyltransferase N-terminal domain"/>
    <property type="match status" value="1"/>
</dbReference>
<sequence length="334" mass="35730">MKEIIAKLADFKDLSSAEMTDVIERIVTGQVAESQIAALLLGLKMKGETIEERTALAQVMRGHAKQIPTTIRTAMDNCGTGGDKSFSFNISTTAAFVLAGGGIKMAKHGNRSISSKSGSADVLEALGINLDLDATSLGKVFEQTGIVFLFAKNMHPAMKYIMPARLSLGIPTIMNLTGPLIHPMNLETQLLGTSRPDMLESTAEVLKNMGRKRAVVVSGPDGLDEAGLHGRTQYALLENGQISLHSFLPSDIGMKEIPLEAIRGGNAKENAEILLSVLQNQASPYLETTVLNAGLGFYANGKSDSIEEGIALARQVIASGAAYEKLKQLQEYQK</sequence>
<keyword id="KW-0028">Amino-acid biosynthesis</keyword>
<keyword id="KW-0057">Aromatic amino acid biosynthesis</keyword>
<keyword id="KW-0328">Glycosyltransferase</keyword>
<keyword id="KW-0460">Magnesium</keyword>
<keyword id="KW-0479">Metal-binding</keyword>
<keyword id="KW-1185">Reference proteome</keyword>
<keyword id="KW-0808">Transferase</keyword>
<keyword id="KW-0822">Tryptophan biosynthesis</keyword>
<name>TRPD_STRGC</name>
<feature type="chain" id="PRO_1000078029" description="Anthranilate phosphoribosyltransferase">
    <location>
        <begin position="1"/>
        <end position="334"/>
    </location>
</feature>
<feature type="binding site" evidence="1">
    <location>
        <position position="79"/>
    </location>
    <ligand>
        <name>5-phospho-alpha-D-ribose 1-diphosphate</name>
        <dbReference type="ChEBI" id="CHEBI:58017"/>
    </ligand>
</feature>
<feature type="binding site" evidence="1">
    <location>
        <position position="79"/>
    </location>
    <ligand>
        <name>anthranilate</name>
        <dbReference type="ChEBI" id="CHEBI:16567"/>
        <label>1</label>
    </ligand>
</feature>
<feature type="binding site" evidence="1">
    <location>
        <begin position="82"/>
        <end position="83"/>
    </location>
    <ligand>
        <name>5-phospho-alpha-D-ribose 1-diphosphate</name>
        <dbReference type="ChEBI" id="CHEBI:58017"/>
    </ligand>
</feature>
<feature type="binding site" evidence="1">
    <location>
        <position position="87"/>
    </location>
    <ligand>
        <name>5-phospho-alpha-D-ribose 1-diphosphate</name>
        <dbReference type="ChEBI" id="CHEBI:58017"/>
    </ligand>
</feature>
<feature type="binding site" evidence="1">
    <location>
        <begin position="89"/>
        <end position="92"/>
    </location>
    <ligand>
        <name>5-phospho-alpha-D-ribose 1-diphosphate</name>
        <dbReference type="ChEBI" id="CHEBI:58017"/>
    </ligand>
</feature>
<feature type="binding site" evidence="1">
    <location>
        <position position="91"/>
    </location>
    <ligand>
        <name>Mg(2+)</name>
        <dbReference type="ChEBI" id="CHEBI:18420"/>
        <label>1</label>
    </ligand>
</feature>
<feature type="binding site" evidence="1">
    <location>
        <begin position="107"/>
        <end position="115"/>
    </location>
    <ligand>
        <name>5-phospho-alpha-D-ribose 1-diphosphate</name>
        <dbReference type="ChEBI" id="CHEBI:58017"/>
    </ligand>
</feature>
<feature type="binding site" evidence="1">
    <location>
        <position position="110"/>
    </location>
    <ligand>
        <name>anthranilate</name>
        <dbReference type="ChEBI" id="CHEBI:16567"/>
        <label>1</label>
    </ligand>
</feature>
<feature type="binding site" evidence="1">
    <location>
        <position position="119"/>
    </location>
    <ligand>
        <name>5-phospho-alpha-D-ribose 1-diphosphate</name>
        <dbReference type="ChEBI" id="CHEBI:58017"/>
    </ligand>
</feature>
<feature type="binding site" evidence="1">
    <location>
        <position position="165"/>
    </location>
    <ligand>
        <name>anthranilate</name>
        <dbReference type="ChEBI" id="CHEBI:16567"/>
        <label>2</label>
    </ligand>
</feature>
<feature type="binding site" evidence="1">
    <location>
        <position position="224"/>
    </location>
    <ligand>
        <name>Mg(2+)</name>
        <dbReference type="ChEBI" id="CHEBI:18420"/>
        <label>2</label>
    </ligand>
</feature>
<feature type="binding site" evidence="1">
    <location>
        <position position="225"/>
    </location>
    <ligand>
        <name>Mg(2+)</name>
        <dbReference type="ChEBI" id="CHEBI:18420"/>
        <label>1</label>
    </ligand>
</feature>
<feature type="binding site" evidence="1">
    <location>
        <position position="225"/>
    </location>
    <ligand>
        <name>Mg(2+)</name>
        <dbReference type="ChEBI" id="CHEBI:18420"/>
        <label>2</label>
    </ligand>
</feature>
<accession>A8AW02</accession>
<evidence type="ECO:0000255" key="1">
    <source>
        <dbReference type="HAMAP-Rule" id="MF_00211"/>
    </source>
</evidence>
<organism>
    <name type="scientific">Streptococcus gordonii (strain Challis / ATCC 35105 / BCRC 15272 / CH1 / DL1 / V288)</name>
    <dbReference type="NCBI Taxonomy" id="467705"/>
    <lineage>
        <taxon>Bacteria</taxon>
        <taxon>Bacillati</taxon>
        <taxon>Bacillota</taxon>
        <taxon>Bacilli</taxon>
        <taxon>Lactobacillales</taxon>
        <taxon>Streptococcaceae</taxon>
        <taxon>Streptococcus</taxon>
    </lineage>
</organism>
<reference key="1">
    <citation type="journal article" date="2007" name="J. Bacteriol.">
        <title>Genome-wide transcriptional changes in Streptococcus gordonii in response to competence signaling peptide.</title>
        <authorList>
            <person name="Vickerman M.M."/>
            <person name="Iobst S."/>
            <person name="Jesionowski A.M."/>
            <person name="Gill S.R."/>
        </authorList>
    </citation>
    <scope>NUCLEOTIDE SEQUENCE [LARGE SCALE GENOMIC DNA]</scope>
    <source>
        <strain>Challis / ATCC 35105 / BCRC 15272 / CH1 / DL1 / V288</strain>
    </source>
</reference>
<comment type="function">
    <text evidence="1">Catalyzes the transfer of the phosphoribosyl group of 5-phosphorylribose-1-pyrophosphate (PRPP) to anthranilate to yield N-(5'-phosphoribosyl)-anthranilate (PRA).</text>
</comment>
<comment type="catalytic activity">
    <reaction evidence="1">
        <text>N-(5-phospho-beta-D-ribosyl)anthranilate + diphosphate = 5-phospho-alpha-D-ribose 1-diphosphate + anthranilate</text>
        <dbReference type="Rhea" id="RHEA:11768"/>
        <dbReference type="ChEBI" id="CHEBI:16567"/>
        <dbReference type="ChEBI" id="CHEBI:18277"/>
        <dbReference type="ChEBI" id="CHEBI:33019"/>
        <dbReference type="ChEBI" id="CHEBI:58017"/>
        <dbReference type="EC" id="2.4.2.18"/>
    </reaction>
</comment>
<comment type="cofactor">
    <cofactor evidence="1">
        <name>Mg(2+)</name>
        <dbReference type="ChEBI" id="CHEBI:18420"/>
    </cofactor>
    <text evidence="1">Binds 2 magnesium ions per monomer.</text>
</comment>
<comment type="pathway">
    <text evidence="1">Amino-acid biosynthesis; L-tryptophan biosynthesis; L-tryptophan from chorismate: step 2/5.</text>
</comment>
<comment type="subunit">
    <text evidence="1">Homodimer.</text>
</comment>
<comment type="similarity">
    <text evidence="1">Belongs to the anthranilate phosphoribosyltransferase family.</text>
</comment>